<accession>P49413</accession>
<accession>C8VUT2</accession>
<accession>Q5BEY9</accession>
<sequence length="1060" mass="118391">MLNPSTSDIHTSPTAVGNGRKRPHPIADSGSAMPSDPSAQQLPHPANESAAIPSIASSSSFRNVSACNRCRQRKNRCDQRLPRCQACEKAGVRCVGYDPITKREIPRSYVYFLESRVAYLEKVLMDNGIEYNEAVAFDEEEAVKIEAGYEAYAGSANGPAAGEIAAQDGSNDKSVRIKKEKNGPLGLEKASRYDHDPEVKQDSDAEDGWRIQNLVSNIGMVSVQGTSDPRYLGSTSGISFARVVFAAVKSSVPGNSSERGPSRPKERLPHSATGTEGSTTRDSFFGLQTRPMMKCAAFPDRELAERLADLYFEHANPQIPIVHRVDFMELLDRTYSVDEKSRSPRSLYFLNIVFAIGSGIIFEDKPAEDQKEGRDHSPSATKRQRLSSRQYQPEEYHASAIVHLESFLSTSPTTDGFGALEELQAVLLLASFALLRPVAPGLWYIVGVAMRLAVDLGLHYEDGAGIDGPENDNMNRTNNKDGEKAKLRIDDHERGRREWVRDFRRRLWWCCYSFDRLVSCCVGRPFGISDQAISTEFPSILEDKYITKSGIIKAPEGAPSYKHSAFHYFKLRVLQSEIQDVLQHQQARFARQRGPPGARSFMRLDVVSPFLQGFDSFRSWRRDVDRRLLEWKNSAPMPSENGVRFPLEFLELNYWQAVIMLYQQSLTVPAELADELSPAEDVSSPSFSQVEEDEHDIYYKVAEAGQKVIRIYRQMHRVRLVNYTYLATHHIFMAGISFLYAIWHSPYVRSRLTLDEVDFTVLAATSVLRDLMHKCPPAEACRDAFERMSKATVEMSLSTTGFGPQVELNRVQTSTSGSRQFNATQSRSRPYSRQQAEQRQRQSASRRQLQMRQSRPLPRFDMNLEDLFGDNRAVAERQGSGGMGKLAQPYPVSETSDPNFARPQSHRNPSMEYYGPFENPVSPQQPQPQPRYYYNNSPQQSGSPGSVVAASGIPPYQVTPTEQENPSGMGLDYLDYDPTGIERQLSLGSEENSDFKFQGGAQSLGHGAGHNFGIDLGFGMAVDFQHDWSENANYDLLEGYFFGGAGATGPGHGHGHGSGI</sequence>
<feature type="chain" id="PRO_0000114985" description="Positive regulator of purine utilization">
    <location>
        <begin position="1"/>
        <end position="1060"/>
    </location>
</feature>
<feature type="DNA-binding region" description="Zn(2)-C6 fungal-type" evidence="1">
    <location>
        <begin position="67"/>
        <end position="94"/>
    </location>
</feature>
<feature type="region of interest" description="Disordered" evidence="2">
    <location>
        <begin position="1"/>
        <end position="48"/>
    </location>
</feature>
<feature type="region of interest" description="Disordered" evidence="2">
    <location>
        <begin position="163"/>
        <end position="207"/>
    </location>
</feature>
<feature type="region of interest" description="Disordered" evidence="2">
    <location>
        <begin position="251"/>
        <end position="282"/>
    </location>
</feature>
<feature type="region of interest" description="Disordered" evidence="2">
    <location>
        <begin position="367"/>
        <end position="391"/>
    </location>
</feature>
<feature type="region of interest" description="Disordered" evidence="2">
    <location>
        <begin position="811"/>
        <end position="862"/>
    </location>
</feature>
<feature type="region of interest" description="Disordered" evidence="2">
    <location>
        <begin position="877"/>
        <end position="969"/>
    </location>
</feature>
<feature type="compositionally biased region" description="Polar residues" evidence="2">
    <location>
        <begin position="1"/>
        <end position="15"/>
    </location>
</feature>
<feature type="compositionally biased region" description="Basic and acidic residues" evidence="2">
    <location>
        <begin position="170"/>
        <end position="182"/>
    </location>
</feature>
<feature type="compositionally biased region" description="Basic and acidic residues" evidence="2">
    <location>
        <begin position="189"/>
        <end position="207"/>
    </location>
</feature>
<feature type="compositionally biased region" description="Basic and acidic residues" evidence="2">
    <location>
        <begin position="260"/>
        <end position="269"/>
    </location>
</feature>
<feature type="compositionally biased region" description="Polar residues" evidence="2">
    <location>
        <begin position="272"/>
        <end position="282"/>
    </location>
</feature>
<feature type="compositionally biased region" description="Basic and acidic residues" evidence="2">
    <location>
        <begin position="367"/>
        <end position="377"/>
    </location>
</feature>
<feature type="compositionally biased region" description="Polar residues" evidence="2">
    <location>
        <begin position="811"/>
        <end position="831"/>
    </location>
</feature>
<feature type="compositionally biased region" description="Low complexity" evidence="2">
    <location>
        <begin position="832"/>
        <end position="859"/>
    </location>
</feature>
<feature type="compositionally biased region" description="Low complexity" evidence="2">
    <location>
        <begin position="930"/>
        <end position="952"/>
    </location>
</feature>
<feature type="sequence conflict" description="In Ref. 1; CAA58838." evidence="3" ref="1">
    <original>A</original>
    <variation>R</variation>
    <location>
        <position position="449"/>
    </location>
</feature>
<feature type="sequence conflict" description="In Ref. 1; CAA58838." evidence="3" ref="1">
    <original>R</original>
    <variation>A</variation>
    <location>
        <position position="476"/>
    </location>
</feature>
<feature type="sequence conflict" description="In Ref. 1; CAA58838." evidence="3" ref="1">
    <original>R</original>
    <variation>A</variation>
    <location>
        <position position="497"/>
    </location>
</feature>
<feature type="sequence conflict" description="In Ref. 1; CAA58838." evidence="3" ref="1">
    <original>QL</original>
    <variation>HV</variation>
    <location>
        <begin position="984"/>
        <end position="985"/>
    </location>
</feature>
<dbReference type="EMBL" id="X84015">
    <property type="protein sequence ID" value="CAA58838.1"/>
    <property type="molecule type" value="Genomic_DNA"/>
</dbReference>
<dbReference type="EMBL" id="AACD01000014">
    <property type="protein sequence ID" value="EAA65920.1"/>
    <property type="molecule type" value="Genomic_DNA"/>
</dbReference>
<dbReference type="EMBL" id="BN001308">
    <property type="protein sequence ID" value="CBF88580.1"/>
    <property type="molecule type" value="Genomic_DNA"/>
</dbReference>
<dbReference type="PIR" id="S54779">
    <property type="entry name" value="S54779"/>
</dbReference>
<dbReference type="RefSeq" id="XP_658495.1">
    <property type="nucleotide sequence ID" value="XM_653403.1"/>
</dbReference>
<dbReference type="SMR" id="P49413"/>
<dbReference type="FunCoup" id="P49413">
    <property type="interactions" value="140"/>
</dbReference>
<dbReference type="STRING" id="227321.P49413"/>
<dbReference type="EnsemblFungi" id="CBF88580">
    <property type="protein sequence ID" value="CBF88580"/>
    <property type="gene ID" value="ANIA_00891"/>
</dbReference>
<dbReference type="KEGG" id="ani:ANIA_00891"/>
<dbReference type="VEuPathDB" id="FungiDB:AN0891"/>
<dbReference type="eggNOG" id="ENOG502QR1M">
    <property type="taxonomic scope" value="Eukaryota"/>
</dbReference>
<dbReference type="HOGENOM" id="CLU_004517_0_0_1"/>
<dbReference type="InParanoid" id="P49413"/>
<dbReference type="OMA" id="HANPQMP"/>
<dbReference type="OrthoDB" id="5373550at2759"/>
<dbReference type="Proteomes" id="UP000000560">
    <property type="component" value="Chromosome VIII"/>
</dbReference>
<dbReference type="GO" id="GO:0005634">
    <property type="term" value="C:nucleus"/>
    <property type="evidence" value="ECO:0007669"/>
    <property type="project" value="UniProtKB-SubCell"/>
</dbReference>
<dbReference type="GO" id="GO:0003700">
    <property type="term" value="F:DNA-binding transcription factor activity"/>
    <property type="evidence" value="ECO:0000315"/>
    <property type="project" value="AspGD"/>
</dbReference>
<dbReference type="GO" id="GO:0000981">
    <property type="term" value="F:DNA-binding transcription factor activity, RNA polymerase II-specific"/>
    <property type="evidence" value="ECO:0000318"/>
    <property type="project" value="GO_Central"/>
</dbReference>
<dbReference type="GO" id="GO:0043565">
    <property type="term" value="F:sequence-specific DNA binding"/>
    <property type="evidence" value="ECO:0000314"/>
    <property type="project" value="AspGD"/>
</dbReference>
<dbReference type="GO" id="GO:0008270">
    <property type="term" value="F:zinc ion binding"/>
    <property type="evidence" value="ECO:0007669"/>
    <property type="project" value="InterPro"/>
</dbReference>
<dbReference type="GO" id="GO:0006351">
    <property type="term" value="P:DNA-templated transcription"/>
    <property type="evidence" value="ECO:0007669"/>
    <property type="project" value="InterPro"/>
</dbReference>
<dbReference type="GO" id="GO:0045944">
    <property type="term" value="P:positive regulation of transcription by RNA polymerase II"/>
    <property type="evidence" value="ECO:0000318"/>
    <property type="project" value="GO_Central"/>
</dbReference>
<dbReference type="GO" id="GO:0006145">
    <property type="term" value="P:purine nucleobase catabolic process"/>
    <property type="evidence" value="ECO:0000315"/>
    <property type="project" value="AspGD"/>
</dbReference>
<dbReference type="GO" id="GO:0006355">
    <property type="term" value="P:regulation of DNA-templated transcription"/>
    <property type="evidence" value="ECO:0000315"/>
    <property type="project" value="AspGD"/>
</dbReference>
<dbReference type="GO" id="GO:0010468">
    <property type="term" value="P:regulation of gene expression"/>
    <property type="evidence" value="ECO:0000315"/>
    <property type="project" value="AspGD"/>
</dbReference>
<dbReference type="CDD" id="cd12148">
    <property type="entry name" value="fungal_TF_MHR"/>
    <property type="match status" value="1"/>
</dbReference>
<dbReference type="CDD" id="cd00067">
    <property type="entry name" value="GAL4"/>
    <property type="match status" value="1"/>
</dbReference>
<dbReference type="CDD" id="cd14723">
    <property type="entry name" value="ZIP_Ppr1"/>
    <property type="match status" value="1"/>
</dbReference>
<dbReference type="FunFam" id="4.10.240.10:FF:000006">
    <property type="entry name" value="Positive regulator of purine utilization"/>
    <property type="match status" value="1"/>
</dbReference>
<dbReference type="Gene3D" id="4.10.240.10">
    <property type="entry name" value="Zn(2)-C6 fungal-type DNA-binding domain"/>
    <property type="match status" value="1"/>
</dbReference>
<dbReference type="InterPro" id="IPR007219">
    <property type="entry name" value="Transcription_factor_dom_fun"/>
</dbReference>
<dbReference type="InterPro" id="IPR052202">
    <property type="entry name" value="Yeast_MetPath_Reg"/>
</dbReference>
<dbReference type="InterPro" id="IPR036864">
    <property type="entry name" value="Zn2-C6_fun-type_DNA-bd_sf"/>
</dbReference>
<dbReference type="InterPro" id="IPR001138">
    <property type="entry name" value="Zn2Cys6_DnaBD"/>
</dbReference>
<dbReference type="PANTHER" id="PTHR47782:SF1">
    <property type="entry name" value="PYRIMIDINE PATHWAY REGULATORY PROTEIN 1"/>
    <property type="match status" value="1"/>
</dbReference>
<dbReference type="PANTHER" id="PTHR47782">
    <property type="entry name" value="ZN(II)2CYS6 TRANSCRIPTION FACTOR (EUROFUNG)-RELATED"/>
    <property type="match status" value="1"/>
</dbReference>
<dbReference type="Pfam" id="PF04082">
    <property type="entry name" value="Fungal_trans"/>
    <property type="match status" value="1"/>
</dbReference>
<dbReference type="Pfam" id="PF00172">
    <property type="entry name" value="Zn_clus"/>
    <property type="match status" value="1"/>
</dbReference>
<dbReference type="SMART" id="SM00906">
    <property type="entry name" value="Fungal_trans"/>
    <property type="match status" value="1"/>
</dbReference>
<dbReference type="SMART" id="SM00066">
    <property type="entry name" value="GAL4"/>
    <property type="match status" value="1"/>
</dbReference>
<dbReference type="SUPFAM" id="SSF57701">
    <property type="entry name" value="Zn2/Cys6 DNA-binding domain"/>
    <property type="match status" value="1"/>
</dbReference>
<dbReference type="PROSITE" id="PS00463">
    <property type="entry name" value="ZN2_CY6_FUNGAL_1"/>
    <property type="match status" value="1"/>
</dbReference>
<dbReference type="PROSITE" id="PS50048">
    <property type="entry name" value="ZN2_CY6_FUNGAL_2"/>
    <property type="match status" value="1"/>
</dbReference>
<organism>
    <name type="scientific">Emericella nidulans (strain FGSC A4 / ATCC 38163 / CBS 112.46 / NRRL 194 / M139)</name>
    <name type="common">Aspergillus nidulans</name>
    <dbReference type="NCBI Taxonomy" id="227321"/>
    <lineage>
        <taxon>Eukaryota</taxon>
        <taxon>Fungi</taxon>
        <taxon>Dikarya</taxon>
        <taxon>Ascomycota</taxon>
        <taxon>Pezizomycotina</taxon>
        <taxon>Eurotiomycetes</taxon>
        <taxon>Eurotiomycetidae</taxon>
        <taxon>Eurotiales</taxon>
        <taxon>Aspergillaceae</taxon>
        <taxon>Aspergillus</taxon>
        <taxon>Aspergillus subgen. Nidulantes</taxon>
    </lineage>
</organism>
<comment type="function">
    <text>Mediates the induction of a number of unlinked genes involved in purine utilization. Binds to the consensus sequence 5'-TCGGNNNNNNCCGA-3'.</text>
</comment>
<comment type="subcellular location">
    <subcellularLocation>
        <location evidence="3">Nucleus</location>
    </subcellularLocation>
</comment>
<evidence type="ECO:0000255" key="1">
    <source>
        <dbReference type="PROSITE-ProRule" id="PRU00227"/>
    </source>
</evidence>
<evidence type="ECO:0000256" key="2">
    <source>
        <dbReference type="SAM" id="MobiDB-lite"/>
    </source>
</evidence>
<evidence type="ECO:0000305" key="3"/>
<name>UAY_EMENI</name>
<keyword id="KW-0010">Activator</keyword>
<keyword id="KW-0238">DNA-binding</keyword>
<keyword id="KW-0479">Metal-binding</keyword>
<keyword id="KW-0539">Nucleus</keyword>
<keyword id="KW-1185">Reference proteome</keyword>
<keyword id="KW-0804">Transcription</keyword>
<keyword id="KW-0805">Transcription regulation</keyword>
<keyword id="KW-0862">Zinc</keyword>
<gene>
    <name type="primary">uaY</name>
    <name type="ORF">AN0891</name>
</gene>
<reference key="1">
    <citation type="journal article" date="1995" name="EMBO J.">
        <title>The sequence and binding specificity of UaY, the specific regulator of the purine utilization pathway in Aspergillus nidulans, suggest an evolutionary relationship with the PPR1 protein of Saccharomyces cerevisiae.</title>
        <authorList>
            <person name="Suarez T."/>
            <person name="Vieira de Queiroz M."/>
            <person name="Oestreicher N."/>
            <person name="Scazzocchio C."/>
        </authorList>
    </citation>
    <scope>NUCLEOTIDE SEQUENCE [GENOMIC DNA]</scope>
</reference>
<reference key="2">
    <citation type="journal article" date="2005" name="Nature">
        <title>Sequencing of Aspergillus nidulans and comparative analysis with A. fumigatus and A. oryzae.</title>
        <authorList>
            <person name="Galagan J.E."/>
            <person name="Calvo S.E."/>
            <person name="Cuomo C."/>
            <person name="Ma L.-J."/>
            <person name="Wortman J.R."/>
            <person name="Batzoglou S."/>
            <person name="Lee S.-I."/>
            <person name="Bastuerkmen M."/>
            <person name="Spevak C.C."/>
            <person name="Clutterbuck J."/>
            <person name="Kapitonov V."/>
            <person name="Jurka J."/>
            <person name="Scazzocchio C."/>
            <person name="Farman M.L."/>
            <person name="Butler J."/>
            <person name="Purcell S."/>
            <person name="Harris S."/>
            <person name="Braus G.H."/>
            <person name="Draht O."/>
            <person name="Busch S."/>
            <person name="D'Enfert C."/>
            <person name="Bouchier C."/>
            <person name="Goldman G.H."/>
            <person name="Bell-Pedersen D."/>
            <person name="Griffiths-Jones S."/>
            <person name="Doonan J.H."/>
            <person name="Yu J."/>
            <person name="Vienken K."/>
            <person name="Pain A."/>
            <person name="Freitag M."/>
            <person name="Selker E.U."/>
            <person name="Archer D.B."/>
            <person name="Penalva M.A."/>
            <person name="Oakley B.R."/>
            <person name="Momany M."/>
            <person name="Tanaka T."/>
            <person name="Kumagai T."/>
            <person name="Asai K."/>
            <person name="Machida M."/>
            <person name="Nierman W.C."/>
            <person name="Denning D.W."/>
            <person name="Caddick M.X."/>
            <person name="Hynes M."/>
            <person name="Paoletti M."/>
            <person name="Fischer R."/>
            <person name="Miller B.L."/>
            <person name="Dyer P.S."/>
            <person name="Sachs M.S."/>
            <person name="Osmani S.A."/>
            <person name="Birren B.W."/>
        </authorList>
    </citation>
    <scope>NUCLEOTIDE SEQUENCE [LARGE SCALE GENOMIC DNA]</scope>
    <source>
        <strain>FGSC A4 / ATCC 38163 / CBS 112.46 / NRRL 194 / M139</strain>
    </source>
</reference>
<reference key="3">
    <citation type="journal article" date="2009" name="Fungal Genet. Biol.">
        <title>The 2008 update of the Aspergillus nidulans genome annotation: a community effort.</title>
        <authorList>
            <person name="Wortman J.R."/>
            <person name="Gilsenan J.M."/>
            <person name="Joardar V."/>
            <person name="Deegan J."/>
            <person name="Clutterbuck J."/>
            <person name="Andersen M.R."/>
            <person name="Archer D."/>
            <person name="Bencina M."/>
            <person name="Braus G."/>
            <person name="Coutinho P."/>
            <person name="von Dohren H."/>
            <person name="Doonan J."/>
            <person name="Driessen A.J."/>
            <person name="Durek P."/>
            <person name="Espeso E."/>
            <person name="Fekete E."/>
            <person name="Flipphi M."/>
            <person name="Estrada C.G."/>
            <person name="Geysens S."/>
            <person name="Goldman G."/>
            <person name="de Groot P.W."/>
            <person name="Hansen K."/>
            <person name="Harris S.D."/>
            <person name="Heinekamp T."/>
            <person name="Helmstaedt K."/>
            <person name="Henrissat B."/>
            <person name="Hofmann G."/>
            <person name="Homan T."/>
            <person name="Horio T."/>
            <person name="Horiuchi H."/>
            <person name="James S."/>
            <person name="Jones M."/>
            <person name="Karaffa L."/>
            <person name="Karanyi Z."/>
            <person name="Kato M."/>
            <person name="Keller N."/>
            <person name="Kelly D.E."/>
            <person name="Kiel J.A."/>
            <person name="Kim J.M."/>
            <person name="van der Klei I.J."/>
            <person name="Klis F.M."/>
            <person name="Kovalchuk A."/>
            <person name="Krasevec N."/>
            <person name="Kubicek C.P."/>
            <person name="Liu B."/>
            <person name="Maccabe A."/>
            <person name="Meyer V."/>
            <person name="Mirabito P."/>
            <person name="Miskei M."/>
            <person name="Mos M."/>
            <person name="Mullins J."/>
            <person name="Nelson D.R."/>
            <person name="Nielsen J."/>
            <person name="Oakley B.R."/>
            <person name="Osmani S.A."/>
            <person name="Pakula T."/>
            <person name="Paszewski A."/>
            <person name="Paulsen I."/>
            <person name="Pilsyk S."/>
            <person name="Pocsi I."/>
            <person name="Punt P.J."/>
            <person name="Ram A.F."/>
            <person name="Ren Q."/>
            <person name="Robellet X."/>
            <person name="Robson G."/>
            <person name="Seiboth B."/>
            <person name="van Solingen P."/>
            <person name="Specht T."/>
            <person name="Sun J."/>
            <person name="Taheri-Talesh N."/>
            <person name="Takeshita N."/>
            <person name="Ussery D."/>
            <person name="vanKuyk P.A."/>
            <person name="Visser H."/>
            <person name="van de Vondervoort P.J."/>
            <person name="de Vries R.P."/>
            <person name="Walton J."/>
            <person name="Xiang X."/>
            <person name="Xiong Y."/>
            <person name="Zeng A.P."/>
            <person name="Brandt B.W."/>
            <person name="Cornell M.J."/>
            <person name="van den Hondel C.A."/>
            <person name="Visser J."/>
            <person name="Oliver S.G."/>
            <person name="Turner G."/>
        </authorList>
    </citation>
    <scope>GENOME REANNOTATION</scope>
    <source>
        <strain>FGSC A4 / ATCC 38163 / CBS 112.46 / NRRL 194 / M139</strain>
    </source>
</reference>
<protein>
    <recommendedName>
        <fullName>Positive regulator of purine utilization</fullName>
    </recommendedName>
</protein>
<proteinExistence type="predicted"/>